<sequence>MPLRPGDASSSASTASNRSRTRTRYRTKAMNSEVDESLFGGVKPSSQGKSDSPIVVIHDKHAIRKTLSALGLEHKTETIQLITRDMVRELIVPTEDPSGESLIISPEEFERIKWASQVLTKEELNAREQALKKEKEGILEAVTIRKKIMKQKEMTWNNNKKLSDLEEVARERAQNLLQRADKLRMEQEEELKDMSKIILNAKCHAIRDAQILEKQQIQKELDEEERRLDHMMEIDRRESLQRQEDRERKRREERVRGKRHIVEQIKKNEEERSLQAEHREQEKEQMLAYLDRLQEEDLQDLERRHQEKLKMQAEIKRINDENQRQKAEMLAQERLADQMVMEFTKKKMAREAEYEAEQEKIRREKEKEIARLRALQEKAQDYQAEQDALRAKRNQEVADREWRRKEKENAQKKIETEEKLRKSRLEQVAFKEHTLAVQVQRDRDEFERILRAQREQIEREKQEQEKKAKGCLQHANELRRQVRENQQKHVQNRLATFEEGRRLKEEAEKRRERIEDIKKQKLEELRATGLPEKYCIEVERKANILPATSVN</sequence>
<proteinExistence type="evidence at protein level"/>
<reference key="1">
    <citation type="journal article" date="2005" name="Science">
        <title>The transcriptional landscape of the mammalian genome.</title>
        <authorList>
            <person name="Carninci P."/>
            <person name="Kasukawa T."/>
            <person name="Katayama S."/>
            <person name="Gough J."/>
            <person name="Frith M.C."/>
            <person name="Maeda N."/>
            <person name="Oyama R."/>
            <person name="Ravasi T."/>
            <person name="Lenhard B."/>
            <person name="Wells C."/>
            <person name="Kodzius R."/>
            <person name="Shimokawa K."/>
            <person name="Bajic V.B."/>
            <person name="Brenner S.E."/>
            <person name="Batalov S."/>
            <person name="Forrest A.R."/>
            <person name="Zavolan M."/>
            <person name="Davis M.J."/>
            <person name="Wilming L.G."/>
            <person name="Aidinis V."/>
            <person name="Allen J.E."/>
            <person name="Ambesi-Impiombato A."/>
            <person name="Apweiler R."/>
            <person name="Aturaliya R.N."/>
            <person name="Bailey T.L."/>
            <person name="Bansal M."/>
            <person name="Baxter L."/>
            <person name="Beisel K.W."/>
            <person name="Bersano T."/>
            <person name="Bono H."/>
            <person name="Chalk A.M."/>
            <person name="Chiu K.P."/>
            <person name="Choudhary V."/>
            <person name="Christoffels A."/>
            <person name="Clutterbuck D.R."/>
            <person name="Crowe M.L."/>
            <person name="Dalla E."/>
            <person name="Dalrymple B.P."/>
            <person name="de Bono B."/>
            <person name="Della Gatta G."/>
            <person name="di Bernardo D."/>
            <person name="Down T."/>
            <person name="Engstrom P."/>
            <person name="Fagiolini M."/>
            <person name="Faulkner G."/>
            <person name="Fletcher C.F."/>
            <person name="Fukushima T."/>
            <person name="Furuno M."/>
            <person name="Futaki S."/>
            <person name="Gariboldi M."/>
            <person name="Georgii-Hemming P."/>
            <person name="Gingeras T.R."/>
            <person name="Gojobori T."/>
            <person name="Green R.E."/>
            <person name="Gustincich S."/>
            <person name="Harbers M."/>
            <person name="Hayashi Y."/>
            <person name="Hensch T.K."/>
            <person name="Hirokawa N."/>
            <person name="Hill D."/>
            <person name="Huminiecki L."/>
            <person name="Iacono M."/>
            <person name="Ikeo K."/>
            <person name="Iwama A."/>
            <person name="Ishikawa T."/>
            <person name="Jakt M."/>
            <person name="Kanapin A."/>
            <person name="Katoh M."/>
            <person name="Kawasawa Y."/>
            <person name="Kelso J."/>
            <person name="Kitamura H."/>
            <person name="Kitano H."/>
            <person name="Kollias G."/>
            <person name="Krishnan S.P."/>
            <person name="Kruger A."/>
            <person name="Kummerfeld S.K."/>
            <person name="Kurochkin I.V."/>
            <person name="Lareau L.F."/>
            <person name="Lazarevic D."/>
            <person name="Lipovich L."/>
            <person name="Liu J."/>
            <person name="Liuni S."/>
            <person name="McWilliam S."/>
            <person name="Madan Babu M."/>
            <person name="Madera M."/>
            <person name="Marchionni L."/>
            <person name="Matsuda H."/>
            <person name="Matsuzawa S."/>
            <person name="Miki H."/>
            <person name="Mignone F."/>
            <person name="Miyake S."/>
            <person name="Morris K."/>
            <person name="Mottagui-Tabar S."/>
            <person name="Mulder N."/>
            <person name="Nakano N."/>
            <person name="Nakauchi H."/>
            <person name="Ng P."/>
            <person name="Nilsson R."/>
            <person name="Nishiguchi S."/>
            <person name="Nishikawa S."/>
            <person name="Nori F."/>
            <person name="Ohara O."/>
            <person name="Okazaki Y."/>
            <person name="Orlando V."/>
            <person name="Pang K.C."/>
            <person name="Pavan W.J."/>
            <person name="Pavesi G."/>
            <person name="Pesole G."/>
            <person name="Petrovsky N."/>
            <person name="Piazza S."/>
            <person name="Reed J."/>
            <person name="Reid J.F."/>
            <person name="Ring B.Z."/>
            <person name="Ringwald M."/>
            <person name="Rost B."/>
            <person name="Ruan Y."/>
            <person name="Salzberg S.L."/>
            <person name="Sandelin A."/>
            <person name="Schneider C."/>
            <person name="Schoenbach C."/>
            <person name="Sekiguchi K."/>
            <person name="Semple C.A."/>
            <person name="Seno S."/>
            <person name="Sessa L."/>
            <person name="Sheng Y."/>
            <person name="Shibata Y."/>
            <person name="Shimada H."/>
            <person name="Shimada K."/>
            <person name="Silva D."/>
            <person name="Sinclair B."/>
            <person name="Sperling S."/>
            <person name="Stupka E."/>
            <person name="Sugiura K."/>
            <person name="Sultana R."/>
            <person name="Takenaka Y."/>
            <person name="Taki K."/>
            <person name="Tammoja K."/>
            <person name="Tan S.L."/>
            <person name="Tang S."/>
            <person name="Taylor M.S."/>
            <person name="Tegner J."/>
            <person name="Teichmann S.A."/>
            <person name="Ueda H.R."/>
            <person name="van Nimwegen E."/>
            <person name="Verardo R."/>
            <person name="Wei C.L."/>
            <person name="Yagi K."/>
            <person name="Yamanishi H."/>
            <person name="Zabarovsky E."/>
            <person name="Zhu S."/>
            <person name="Zimmer A."/>
            <person name="Hide W."/>
            <person name="Bult C."/>
            <person name="Grimmond S.M."/>
            <person name="Teasdale R.D."/>
            <person name="Liu E.T."/>
            <person name="Brusic V."/>
            <person name="Quackenbush J."/>
            <person name="Wahlestedt C."/>
            <person name="Mattick J.S."/>
            <person name="Hume D.A."/>
            <person name="Kai C."/>
            <person name="Sasaki D."/>
            <person name="Tomaru Y."/>
            <person name="Fukuda S."/>
            <person name="Kanamori-Katayama M."/>
            <person name="Suzuki M."/>
            <person name="Aoki J."/>
            <person name="Arakawa T."/>
            <person name="Iida J."/>
            <person name="Imamura K."/>
            <person name="Itoh M."/>
            <person name="Kato T."/>
            <person name="Kawaji H."/>
            <person name="Kawagashira N."/>
            <person name="Kawashima T."/>
            <person name="Kojima M."/>
            <person name="Kondo S."/>
            <person name="Konno H."/>
            <person name="Nakano K."/>
            <person name="Ninomiya N."/>
            <person name="Nishio T."/>
            <person name="Okada M."/>
            <person name="Plessy C."/>
            <person name="Shibata K."/>
            <person name="Shiraki T."/>
            <person name="Suzuki S."/>
            <person name="Tagami M."/>
            <person name="Waki K."/>
            <person name="Watahiki A."/>
            <person name="Okamura-Oho Y."/>
            <person name="Suzuki H."/>
            <person name="Kawai J."/>
            <person name="Hayashizaki Y."/>
        </authorList>
    </citation>
    <scope>NUCLEOTIDE SEQUENCE [LARGE SCALE MRNA]</scope>
    <source>
        <strain evidence="14">C57BL/6J</strain>
        <tissue evidence="14">Testis</tissue>
    </source>
</reference>
<reference key="2">
    <citation type="journal article" date="2009" name="PLoS Biol.">
        <title>Lineage-specific biology revealed by a finished genome assembly of the mouse.</title>
        <authorList>
            <person name="Church D.M."/>
            <person name="Goodstadt L."/>
            <person name="Hillier L.W."/>
            <person name="Zody M.C."/>
            <person name="Goldstein S."/>
            <person name="She X."/>
            <person name="Bult C.J."/>
            <person name="Agarwala R."/>
            <person name="Cherry J.L."/>
            <person name="DiCuccio M."/>
            <person name="Hlavina W."/>
            <person name="Kapustin Y."/>
            <person name="Meric P."/>
            <person name="Maglott D."/>
            <person name="Birtle Z."/>
            <person name="Marques A.C."/>
            <person name="Graves T."/>
            <person name="Zhou S."/>
            <person name="Teague B."/>
            <person name="Potamousis K."/>
            <person name="Churas C."/>
            <person name="Place M."/>
            <person name="Herschleb J."/>
            <person name="Runnheim R."/>
            <person name="Forrest D."/>
            <person name="Amos-Landgraf J."/>
            <person name="Schwartz D.C."/>
            <person name="Cheng Z."/>
            <person name="Lindblad-Toh K."/>
            <person name="Eichler E.E."/>
            <person name="Ponting C.P."/>
        </authorList>
    </citation>
    <scope>NUCLEOTIDE SEQUENCE [LARGE SCALE GENOMIC DNA]</scope>
    <source>
        <strain>C57BL/6J</strain>
    </source>
</reference>
<reference key="3">
    <citation type="journal article" date="2004" name="Genome Res.">
        <title>The status, quality, and expansion of the NIH full-length cDNA project: the Mammalian Gene Collection (MGC).</title>
        <authorList>
            <consortium name="The MGC Project Team"/>
        </authorList>
    </citation>
    <scope>NUCLEOTIDE SEQUENCE [LARGE SCALE MRNA]</scope>
    <source>
        <tissue evidence="13">Brain</tissue>
    </source>
</reference>
<reference key="4">
    <citation type="journal article" date="2020" name="Nat. Commun.">
        <title>CFAP45 deficiency causes situs abnormalities and asthenospermia by disrupting an axonemal adenine nucleotide homeostasis module.</title>
        <authorList>
            <person name="Dougherty G.W."/>
            <person name="Mizuno K."/>
            <person name="Noethe-Menchen T."/>
            <person name="Ikawa Y."/>
            <person name="Boldt K."/>
            <person name="Ta-Shma A."/>
            <person name="Aprea I."/>
            <person name="Minegishi K."/>
            <person name="Pang Y.P."/>
            <person name="Pennekamp P."/>
            <person name="Loges N.T."/>
            <person name="Raidt J."/>
            <person name="Hjeij R."/>
            <person name="Wallmeier J."/>
            <person name="Mussaffi H."/>
            <person name="Perles Z."/>
            <person name="Elpeleg O."/>
            <person name="Rabert F."/>
            <person name="Shiratori H."/>
            <person name="Letteboer S.J."/>
            <person name="Horn N."/>
            <person name="Young S."/>
            <person name="Struenker T."/>
            <person name="Stumme F."/>
            <person name="Werner C."/>
            <person name="Olbrich H."/>
            <person name="Takaoka K."/>
            <person name="Ide T."/>
            <person name="Twan W.K."/>
            <person name="Biebach L."/>
            <person name="Grosse-Onnebrink J."/>
            <person name="Klinkenbusch J.A."/>
            <person name="Praveen K."/>
            <person name="Bracht D.C."/>
            <person name="Hoeben I.M."/>
            <person name="Junger K."/>
            <person name="Guetzlaff J."/>
            <person name="Cindric S."/>
            <person name="Aviram M."/>
            <person name="Kaiser T."/>
            <person name="Memari Y."/>
            <person name="Dzeja P.P."/>
            <person name="Dworniczak B."/>
            <person name="Ueffing M."/>
            <person name="Roepman R."/>
            <person name="Bartscherer K."/>
            <person name="Katsanis N."/>
            <person name="Davis E.E."/>
            <person name="Amirav I."/>
            <person name="Hamada H."/>
            <person name="Omran H."/>
        </authorList>
    </citation>
    <scope>SUBCELLULAR LOCATION</scope>
    <scope>TISSUE SPECIFICITY</scope>
    <scope>DISRUPTION PHENOTYPE</scope>
</reference>
<reference evidence="16" key="5">
    <citation type="journal article" date="2023" name="Cell">
        <title>Structures of sperm flagellar doublet microtubules expand the genetic spectrum of male infertility.</title>
        <authorList>
            <person name="Zhou L."/>
            <person name="Liu H."/>
            <person name="Liu S."/>
            <person name="Yang X."/>
            <person name="Dong Y."/>
            <person name="Pan Y."/>
            <person name="Xiao Z."/>
            <person name="Zheng B."/>
            <person name="Sun Y."/>
            <person name="Huang P."/>
            <person name="Zhang X."/>
            <person name="Hu J."/>
            <person name="Sun R."/>
            <person name="Feng S."/>
            <person name="Zhu Y."/>
            <person name="Liu M."/>
            <person name="Gui M."/>
            <person name="Wu J."/>
        </authorList>
    </citation>
    <scope>STRUCTURE BY ELECTRON MICROSCOPY (3.50 ANGSTROMS) OF SPERM FLAGELLAR DOUBLET MICROTUBULES</scope>
    <scope>FUNCTION</scope>
    <scope>SUBCELLULAR LOCATION</scope>
    <scope>SUBUNIT</scope>
</reference>
<reference evidence="17" key="6">
    <citation type="journal article" date="2023" name="Cell">
        <title>De novo protein identification in mammalian sperm using in situ cryoelectron tomography and AlphaFold2 docking.</title>
        <authorList>
            <person name="Chen Z."/>
            <person name="Shiozaki M."/>
            <person name="Haas K.M."/>
            <person name="Skinner W.M."/>
            <person name="Zhao S."/>
            <person name="Guo C."/>
            <person name="Polacco B.J."/>
            <person name="Yu Z."/>
            <person name="Krogan N.J."/>
            <person name="Lishko P.V."/>
            <person name="Kaake R.M."/>
            <person name="Vale R.D."/>
            <person name="Agard D.A."/>
        </authorList>
    </citation>
    <scope>STRUCTURE BY ELECTRON MICROSCOPY (7.70 ANGSTROMS) OF SPERM FLAGELLAR DOUBLET MICROTUBULES</scope>
    <scope>FUNCTION</scope>
    <scope>SUBCELLULAR LOCATION</scope>
    <scope>SUBUNIT</scope>
</reference>
<reference evidence="15" key="7">
    <citation type="journal article" date="2023" name="Cell Discov.">
        <title>In-cell structural insight into the stability of sperm microtubule doublet.</title>
        <authorList>
            <person name="Tai L."/>
            <person name="Yin G."/>
            <person name="Huang X."/>
            <person name="Sun F."/>
            <person name="Zhu Y."/>
        </authorList>
    </citation>
    <scope>STRUCTURE BY ELECTRON MICROSCOPY (4.50 ANGSTROMS)</scope>
    <scope>FUNCTION</scope>
    <scope>SUBUNIT</scope>
    <scope>SUBCELLULAR LOCATION</scope>
</reference>
<protein>
    <recommendedName>
        <fullName evidence="11">Cilia- and flagella-associated protein 45</fullName>
    </recommendedName>
    <alternativeName>
        <fullName>Coiled-coil domain-containing protein 19</fullName>
    </alternativeName>
    <alternativeName>
        <fullName evidence="10">Nasopharyngeal epithelium-specific protein 1</fullName>
    </alternativeName>
</protein>
<organism evidence="14">
    <name type="scientific">Mus musculus</name>
    <name type="common">Mouse</name>
    <dbReference type="NCBI Taxonomy" id="10090"/>
    <lineage>
        <taxon>Eukaryota</taxon>
        <taxon>Metazoa</taxon>
        <taxon>Chordata</taxon>
        <taxon>Craniata</taxon>
        <taxon>Vertebrata</taxon>
        <taxon>Euteleostomi</taxon>
        <taxon>Mammalia</taxon>
        <taxon>Eutheria</taxon>
        <taxon>Euarchontoglires</taxon>
        <taxon>Glires</taxon>
        <taxon>Rodentia</taxon>
        <taxon>Myomorpha</taxon>
        <taxon>Muroidea</taxon>
        <taxon>Muridae</taxon>
        <taxon>Murinae</taxon>
        <taxon>Mus</taxon>
        <taxon>Mus</taxon>
    </lineage>
</organism>
<feature type="chain" id="PRO_0000454202" description="Cilia- and flagella-associated protein 45">
    <location>
        <begin position="1"/>
        <end position="551"/>
    </location>
</feature>
<feature type="region of interest" description="Disordered" evidence="4">
    <location>
        <begin position="1"/>
        <end position="52"/>
    </location>
</feature>
<feature type="region of interest" description="Disordered" evidence="4">
    <location>
        <begin position="232"/>
        <end position="256"/>
    </location>
</feature>
<feature type="region of interest" description="Disordered" evidence="4">
    <location>
        <begin position="385"/>
        <end position="415"/>
    </location>
</feature>
<feature type="coiled-coil region" evidence="3">
    <location>
        <begin position="276"/>
        <end position="524"/>
    </location>
</feature>
<feature type="compositionally biased region" description="Low complexity" evidence="4">
    <location>
        <begin position="8"/>
        <end position="18"/>
    </location>
</feature>
<feature type="compositionally biased region" description="Basic and acidic residues" evidence="4">
    <location>
        <begin position="387"/>
        <end position="415"/>
    </location>
</feature>
<accession>Q9D9U9</accession>
<name>CFA45_MOUSE</name>
<dbReference type="EMBL" id="AK006449">
    <property type="protein sequence ID" value="BAB24596.1"/>
    <property type="molecule type" value="mRNA"/>
</dbReference>
<dbReference type="EMBL" id="BC150929">
    <property type="protein sequence ID" value="AAI50930.1"/>
    <property type="molecule type" value="mRNA"/>
</dbReference>
<dbReference type="EMBL" id="BC151048">
    <property type="protein sequence ID" value="AAI51049.1"/>
    <property type="molecule type" value="mRNA"/>
</dbReference>
<dbReference type="EMBL" id="BC151055">
    <property type="protein sequence ID" value="AAI51056.1"/>
    <property type="molecule type" value="mRNA"/>
</dbReference>
<dbReference type="CCDS" id="CCDS48447.1"/>
<dbReference type="RefSeq" id="NP_082248.1">
    <property type="nucleotide sequence ID" value="NM_027972.1"/>
</dbReference>
<dbReference type="PDB" id="8I7R">
    <property type="method" value="EM"/>
    <property type="resolution" value="6.50 A"/>
    <property type="chains" value="U/V/W/X=1-551"/>
</dbReference>
<dbReference type="PDB" id="8IYJ">
    <property type="method" value="EM"/>
    <property type="resolution" value="3.50 A"/>
    <property type="chains" value="a/a6/b/c/d=1-551"/>
</dbReference>
<dbReference type="PDB" id="8TO0">
    <property type="method" value="EM"/>
    <property type="resolution" value="7.70 A"/>
    <property type="chains" value="AA/Ax/B/c/d=1-551"/>
</dbReference>
<dbReference type="PDBsum" id="8I7R"/>
<dbReference type="PDBsum" id="8IYJ"/>
<dbReference type="PDBsum" id="8TO0"/>
<dbReference type="EMDB" id="EMD-35230"/>
<dbReference type="EMDB" id="EMD-35823"/>
<dbReference type="EMDB" id="EMD-41431"/>
<dbReference type="SMR" id="Q9D9U9"/>
<dbReference type="FunCoup" id="Q9D9U9">
    <property type="interactions" value="74"/>
</dbReference>
<dbReference type="STRING" id="10090.ENSMUSP00000083057"/>
<dbReference type="iPTMnet" id="Q9D9U9"/>
<dbReference type="PhosphoSitePlus" id="Q9D9U9"/>
<dbReference type="jPOST" id="Q9D9U9"/>
<dbReference type="PaxDb" id="10090-ENSMUSP00000083057"/>
<dbReference type="ProteomicsDB" id="333100"/>
<dbReference type="Antibodypedia" id="34262">
    <property type="antibodies" value="147 antibodies from 22 providers"/>
</dbReference>
<dbReference type="Ensembl" id="ENSMUST00000085894.12">
    <property type="protein sequence ID" value="ENSMUSP00000083057.6"/>
    <property type="gene ID" value="ENSMUSG00000026546.17"/>
</dbReference>
<dbReference type="GeneID" id="71870"/>
<dbReference type="KEGG" id="mmu:71870"/>
<dbReference type="UCSC" id="uc007dqq.2">
    <property type="organism name" value="mouse"/>
</dbReference>
<dbReference type="AGR" id="MGI:1919120"/>
<dbReference type="CTD" id="25790"/>
<dbReference type="MGI" id="MGI:1919120">
    <property type="gene designation" value="Cfap45"/>
</dbReference>
<dbReference type="VEuPathDB" id="HostDB:ENSMUSG00000026546"/>
<dbReference type="eggNOG" id="ENOG502QPRZ">
    <property type="taxonomic scope" value="Eukaryota"/>
</dbReference>
<dbReference type="GeneTree" id="ENSGT00730000111174"/>
<dbReference type="HOGENOM" id="CLU_026959_1_1_1"/>
<dbReference type="InParanoid" id="Q9D9U9"/>
<dbReference type="OMA" id="WGHKPET"/>
<dbReference type="OrthoDB" id="1902038at2759"/>
<dbReference type="PhylomeDB" id="Q9D9U9"/>
<dbReference type="TreeFam" id="TF327685"/>
<dbReference type="BioGRID-ORCS" id="71870">
    <property type="hits" value="1 hit in 77 CRISPR screens"/>
</dbReference>
<dbReference type="ChiTaRS" id="Cfap45">
    <property type="organism name" value="mouse"/>
</dbReference>
<dbReference type="PRO" id="PR:Q9D9U9"/>
<dbReference type="Proteomes" id="UP000000589">
    <property type="component" value="Chromosome 1"/>
</dbReference>
<dbReference type="RNAct" id="Q9D9U9">
    <property type="molecule type" value="protein"/>
</dbReference>
<dbReference type="Bgee" id="ENSMUSG00000026546">
    <property type="expression patterns" value="Expressed in spermatid and 79 other cell types or tissues"/>
</dbReference>
<dbReference type="ExpressionAtlas" id="Q9D9U9">
    <property type="expression patterns" value="baseline and differential"/>
</dbReference>
<dbReference type="GO" id="GO:0097728">
    <property type="term" value="C:9+0 motile cilium"/>
    <property type="evidence" value="ECO:0000314"/>
    <property type="project" value="MGI"/>
</dbReference>
<dbReference type="GO" id="GO:0160112">
    <property type="term" value="C:axonemal B tubule inner sheath"/>
    <property type="evidence" value="ECO:0000314"/>
    <property type="project" value="UniProtKB"/>
</dbReference>
<dbReference type="GO" id="GO:0005879">
    <property type="term" value="C:axonemal microtubule"/>
    <property type="evidence" value="ECO:0000250"/>
    <property type="project" value="UniProtKB"/>
</dbReference>
<dbReference type="GO" id="GO:0005576">
    <property type="term" value="C:extracellular region"/>
    <property type="evidence" value="ECO:0007669"/>
    <property type="project" value="GOC"/>
</dbReference>
<dbReference type="GO" id="GO:0036126">
    <property type="term" value="C:sperm flagellum"/>
    <property type="evidence" value="ECO:0000314"/>
    <property type="project" value="UniProtKB"/>
</dbReference>
<dbReference type="GO" id="GO:0016208">
    <property type="term" value="F:AMP binding"/>
    <property type="evidence" value="ECO:0007669"/>
    <property type="project" value="Ensembl"/>
</dbReference>
<dbReference type="GO" id="GO:0090660">
    <property type="term" value="P:cerebrospinal fluid circulation"/>
    <property type="evidence" value="ECO:0000315"/>
    <property type="project" value="MGI"/>
</dbReference>
<dbReference type="GO" id="GO:0060287">
    <property type="term" value="P:epithelial cilium movement involved in determination of left/right asymmetry"/>
    <property type="evidence" value="ECO:0000315"/>
    <property type="project" value="MGI"/>
</dbReference>
<dbReference type="GO" id="GO:0061966">
    <property type="term" value="P:establishment of left/right asymmetry"/>
    <property type="evidence" value="ECO:0007669"/>
    <property type="project" value="Ensembl"/>
</dbReference>
<dbReference type="GO" id="GO:0030317">
    <property type="term" value="P:flagellated sperm motility"/>
    <property type="evidence" value="ECO:0000314"/>
    <property type="project" value="UniProtKB"/>
</dbReference>
<dbReference type="GO" id="GO:0060296">
    <property type="term" value="P:regulation of cilium beat frequency involved in ciliary motility"/>
    <property type="evidence" value="ECO:0000315"/>
    <property type="project" value="MGI"/>
</dbReference>
<dbReference type="InterPro" id="IPR033253">
    <property type="entry name" value="CFAP45"/>
</dbReference>
<dbReference type="InterPro" id="IPR043597">
    <property type="entry name" value="TPH_dom"/>
</dbReference>
<dbReference type="PANTHER" id="PTHR15504:SF0">
    <property type="entry name" value="CILIA- AND FLAGELLA-ASSOCIATED PROTEIN 45"/>
    <property type="match status" value="1"/>
</dbReference>
<dbReference type="PANTHER" id="PTHR15504">
    <property type="entry name" value="NASOPHARYNGEAL EPITHELIUM SPECIFIC PROTEIN 1"/>
    <property type="match status" value="1"/>
</dbReference>
<dbReference type="Pfam" id="PF13868">
    <property type="entry name" value="TPH"/>
    <property type="match status" value="1"/>
</dbReference>
<gene>
    <name type="primary">Cfap45</name>
    <name evidence="9 10" type="synonym">Ccdc19</name>
    <name type="synonym">Nesg1</name>
</gene>
<evidence type="ECO:0000250" key="1">
    <source>
        <dbReference type="UniProtKB" id="Q32LN4"/>
    </source>
</evidence>
<evidence type="ECO:0000250" key="2">
    <source>
        <dbReference type="UniProtKB" id="Q9UL16"/>
    </source>
</evidence>
<evidence type="ECO:0000255" key="3"/>
<evidence type="ECO:0000256" key="4">
    <source>
        <dbReference type="SAM" id="MobiDB-lite"/>
    </source>
</evidence>
<evidence type="ECO:0000269" key="5">
    <source>
    </source>
</evidence>
<evidence type="ECO:0000269" key="6">
    <source>
    </source>
</evidence>
<evidence type="ECO:0000269" key="7">
    <source>
    </source>
</evidence>
<evidence type="ECO:0000269" key="8">
    <source>
    </source>
</evidence>
<evidence type="ECO:0000303" key="9">
    <source>
    </source>
</evidence>
<evidence type="ECO:0000303" key="10">
    <source>
    </source>
</evidence>
<evidence type="ECO:0000303" key="11">
    <source>
    </source>
</evidence>
<evidence type="ECO:0000305" key="12"/>
<evidence type="ECO:0000312" key="13">
    <source>
        <dbReference type="EMBL" id="AAI50930.1"/>
    </source>
</evidence>
<evidence type="ECO:0000312" key="14">
    <source>
        <dbReference type="EMBL" id="BAB24596.1"/>
    </source>
</evidence>
<evidence type="ECO:0007744" key="15">
    <source>
        <dbReference type="PDB" id="8I7R"/>
    </source>
</evidence>
<evidence type="ECO:0007744" key="16">
    <source>
        <dbReference type="PDB" id="8IYJ"/>
    </source>
</evidence>
<evidence type="ECO:0007744" key="17">
    <source>
        <dbReference type="PDB" id="8TO0"/>
    </source>
</evidence>
<keyword id="KW-0002">3D-structure</keyword>
<keyword id="KW-0966">Cell projection</keyword>
<keyword id="KW-0969">Cilium</keyword>
<keyword id="KW-0175">Coiled coil</keyword>
<keyword id="KW-0963">Cytoplasm</keyword>
<keyword id="KW-0206">Cytoskeleton</keyword>
<keyword id="KW-0282">Flagellum</keyword>
<keyword id="KW-1185">Reference proteome</keyword>
<comment type="function">
    <text evidence="1 5 6 7 8">Microtubule inner protein (MIP) part of the dynein-decorated doublet microtubules (DMTs) in cilia axoneme, which is required for motile cilia beating (PubMed:37295417, PubMed:37865089, PubMed:37989994). It is an AMP-binding protein that may facilitate dynein ATPase-dependent ciliary and flagellar beating via adenine nucleotide homeostasis (By similarity). May function as a donor of AMP to AK8 and hence promote ADP production (PubMed:33139725).</text>
</comment>
<comment type="subunit">
    <text evidence="2 6 7 8">Microtubule inner protein component of sperm flagellar doublet microtubules (PubMed:37295417, PubMed:37865089, PubMed:37989994). Interacts with AK8; dimerization with AK8 may create a cavity at the interface of the dimer that can accommodate AMP (By similarity). Interacts with CFAP52 (By similarity). Interacts with ENKUR (By similarity). Directly interacts with DNALI1 (By similarity). Interacts with DNAH11 (By similarity). Interacts with DNAI1 (By similarity).</text>
</comment>
<comment type="subcellular location">
    <subcellularLocation>
        <location evidence="5">Cytoplasm</location>
        <location evidence="5">Cytoskeleton</location>
        <location evidence="5">Cilium axoneme</location>
    </subcellularLocation>
    <subcellularLocation>
        <location evidence="5 6 7 8">Cytoplasm</location>
        <location evidence="5 6 7 8">Cytoskeleton</location>
        <location evidence="5 6 7 8">Flagellum axoneme</location>
    </subcellularLocation>
    <subcellularLocation>
        <location evidence="2">Cell projection</location>
        <location evidence="2">Cilium</location>
    </subcellularLocation>
    <subcellularLocation>
        <location evidence="2">Cell projection</location>
        <location evidence="2">Cilium</location>
        <location evidence="2">Flagellum</location>
    </subcellularLocation>
    <text evidence="5">Located in the proximal region of respiratory cilia.</text>
</comment>
<comment type="tissue specificity">
    <text evidence="5">Expressed in respiratory cells and in sperm (at protein level).</text>
</comment>
<comment type="disruption phenotype">
    <text evidence="5">Knockout animals display left-right asymmetry abnormalities, including situs inversus totalis. Nodal cilia rotational speed is reduced compared to heterozyous littermates. Mutant males also exhibit asthenospermia and are infertile.</text>
</comment>
<comment type="similarity">
    <text evidence="12">Belongs to the CFAP45 family.</text>
</comment>